<dbReference type="EMBL" id="AE017226">
    <property type="protein sequence ID" value="AAS11123.1"/>
    <property type="molecule type" value="Genomic_DNA"/>
</dbReference>
<dbReference type="RefSeq" id="NP_971242.1">
    <property type="nucleotide sequence ID" value="NC_002967.9"/>
</dbReference>
<dbReference type="RefSeq" id="WP_002681815.1">
    <property type="nucleotide sequence ID" value="NC_002967.9"/>
</dbReference>
<dbReference type="SMR" id="Q73Q16"/>
<dbReference type="STRING" id="243275.TDE_0628"/>
<dbReference type="PaxDb" id="243275-TDE_0628"/>
<dbReference type="GeneID" id="2739353"/>
<dbReference type="KEGG" id="tde:TDE_0628"/>
<dbReference type="PATRIC" id="fig|243275.7.peg.606"/>
<dbReference type="eggNOG" id="COG0443">
    <property type="taxonomic scope" value="Bacteria"/>
</dbReference>
<dbReference type="HOGENOM" id="CLU_005965_2_4_12"/>
<dbReference type="OrthoDB" id="9766019at2"/>
<dbReference type="Proteomes" id="UP000008212">
    <property type="component" value="Chromosome"/>
</dbReference>
<dbReference type="GO" id="GO:0005524">
    <property type="term" value="F:ATP binding"/>
    <property type="evidence" value="ECO:0007669"/>
    <property type="project" value="UniProtKB-UniRule"/>
</dbReference>
<dbReference type="GO" id="GO:0140662">
    <property type="term" value="F:ATP-dependent protein folding chaperone"/>
    <property type="evidence" value="ECO:0007669"/>
    <property type="project" value="InterPro"/>
</dbReference>
<dbReference type="GO" id="GO:0051082">
    <property type="term" value="F:unfolded protein binding"/>
    <property type="evidence" value="ECO:0007669"/>
    <property type="project" value="InterPro"/>
</dbReference>
<dbReference type="CDD" id="cd10234">
    <property type="entry name" value="ASKHA_NBD_HSP70_DnaK-like"/>
    <property type="match status" value="1"/>
</dbReference>
<dbReference type="FunFam" id="2.60.34.10:FF:000014">
    <property type="entry name" value="Chaperone protein DnaK HSP70"/>
    <property type="match status" value="1"/>
</dbReference>
<dbReference type="FunFam" id="3.30.420.40:FF:000020">
    <property type="entry name" value="Chaperone protein HscA homolog"/>
    <property type="match status" value="1"/>
</dbReference>
<dbReference type="FunFam" id="1.20.1270.10:FF:000001">
    <property type="entry name" value="Molecular chaperone DnaK"/>
    <property type="match status" value="1"/>
</dbReference>
<dbReference type="FunFam" id="3.30.420.40:FF:000004">
    <property type="entry name" value="Molecular chaperone DnaK"/>
    <property type="match status" value="1"/>
</dbReference>
<dbReference type="FunFam" id="3.90.640.10:FF:000003">
    <property type="entry name" value="Molecular chaperone DnaK"/>
    <property type="match status" value="1"/>
</dbReference>
<dbReference type="Gene3D" id="1.20.1270.10">
    <property type="match status" value="1"/>
</dbReference>
<dbReference type="Gene3D" id="3.30.420.40">
    <property type="match status" value="2"/>
</dbReference>
<dbReference type="Gene3D" id="3.90.640.10">
    <property type="entry name" value="Actin, Chain A, domain 4"/>
    <property type="match status" value="1"/>
</dbReference>
<dbReference type="Gene3D" id="2.60.34.10">
    <property type="entry name" value="Substrate Binding Domain Of DNAk, Chain A, domain 1"/>
    <property type="match status" value="1"/>
</dbReference>
<dbReference type="HAMAP" id="MF_00332">
    <property type="entry name" value="DnaK"/>
    <property type="match status" value="1"/>
</dbReference>
<dbReference type="InterPro" id="IPR043129">
    <property type="entry name" value="ATPase_NBD"/>
</dbReference>
<dbReference type="InterPro" id="IPR012725">
    <property type="entry name" value="Chaperone_DnaK"/>
</dbReference>
<dbReference type="InterPro" id="IPR018181">
    <property type="entry name" value="Heat_shock_70_CS"/>
</dbReference>
<dbReference type="InterPro" id="IPR029048">
    <property type="entry name" value="HSP70_C_sf"/>
</dbReference>
<dbReference type="InterPro" id="IPR029047">
    <property type="entry name" value="HSP70_peptide-bd_sf"/>
</dbReference>
<dbReference type="InterPro" id="IPR013126">
    <property type="entry name" value="Hsp_70_fam"/>
</dbReference>
<dbReference type="NCBIfam" id="NF001413">
    <property type="entry name" value="PRK00290.1"/>
    <property type="match status" value="1"/>
</dbReference>
<dbReference type="NCBIfam" id="NF003520">
    <property type="entry name" value="PRK05183.1"/>
    <property type="match status" value="1"/>
</dbReference>
<dbReference type="NCBIfam" id="TIGR02350">
    <property type="entry name" value="prok_dnaK"/>
    <property type="match status" value="1"/>
</dbReference>
<dbReference type="PANTHER" id="PTHR19375">
    <property type="entry name" value="HEAT SHOCK PROTEIN 70KDA"/>
    <property type="match status" value="1"/>
</dbReference>
<dbReference type="Pfam" id="PF00012">
    <property type="entry name" value="HSP70"/>
    <property type="match status" value="1"/>
</dbReference>
<dbReference type="PRINTS" id="PR00301">
    <property type="entry name" value="HEATSHOCK70"/>
</dbReference>
<dbReference type="SUPFAM" id="SSF53067">
    <property type="entry name" value="Actin-like ATPase domain"/>
    <property type="match status" value="2"/>
</dbReference>
<dbReference type="SUPFAM" id="SSF100934">
    <property type="entry name" value="Heat shock protein 70kD (HSP70), C-terminal subdomain"/>
    <property type="match status" value="1"/>
</dbReference>
<dbReference type="SUPFAM" id="SSF100920">
    <property type="entry name" value="Heat shock protein 70kD (HSP70), peptide-binding domain"/>
    <property type="match status" value="1"/>
</dbReference>
<dbReference type="PROSITE" id="PS00297">
    <property type="entry name" value="HSP70_1"/>
    <property type="match status" value="1"/>
</dbReference>
<dbReference type="PROSITE" id="PS00329">
    <property type="entry name" value="HSP70_2"/>
    <property type="match status" value="1"/>
</dbReference>
<dbReference type="PROSITE" id="PS01036">
    <property type="entry name" value="HSP70_3"/>
    <property type="match status" value="1"/>
</dbReference>
<keyword id="KW-0067">ATP-binding</keyword>
<keyword id="KW-0143">Chaperone</keyword>
<keyword id="KW-0547">Nucleotide-binding</keyword>
<keyword id="KW-0597">Phosphoprotein</keyword>
<keyword id="KW-1185">Reference proteome</keyword>
<keyword id="KW-0346">Stress response</keyword>
<comment type="function">
    <text evidence="1">Acts as a chaperone.</text>
</comment>
<comment type="induction">
    <text evidence="1">By stress conditions e.g. heat shock.</text>
</comment>
<comment type="similarity">
    <text evidence="1">Belongs to the heat shock protein 70 family.</text>
</comment>
<feature type="chain" id="PRO_0000226025" description="Chaperone protein DnaK">
    <location>
        <begin position="1"/>
        <end position="646"/>
    </location>
</feature>
<feature type="region of interest" description="Disordered" evidence="2">
    <location>
        <begin position="599"/>
        <end position="646"/>
    </location>
</feature>
<feature type="compositionally biased region" description="Polar residues" evidence="2">
    <location>
        <begin position="610"/>
        <end position="628"/>
    </location>
</feature>
<feature type="compositionally biased region" description="Acidic residues" evidence="2">
    <location>
        <begin position="633"/>
        <end position="646"/>
    </location>
</feature>
<feature type="modified residue" description="Phosphothreonine; by autocatalysis" evidence="1">
    <location>
        <position position="197"/>
    </location>
</feature>
<reference key="1">
    <citation type="journal article" date="2004" name="Proc. Natl. Acad. Sci. U.S.A.">
        <title>Comparison of the genome of the oral pathogen Treponema denticola with other spirochete genomes.</title>
        <authorList>
            <person name="Seshadri R."/>
            <person name="Myers G.S.A."/>
            <person name="Tettelin H."/>
            <person name="Eisen J.A."/>
            <person name="Heidelberg J.F."/>
            <person name="Dodson R.J."/>
            <person name="Davidsen T.M."/>
            <person name="DeBoy R.T."/>
            <person name="Fouts D.E."/>
            <person name="Haft D.H."/>
            <person name="Selengut J."/>
            <person name="Ren Q."/>
            <person name="Brinkac L.M."/>
            <person name="Madupu R."/>
            <person name="Kolonay J.F."/>
            <person name="Durkin S.A."/>
            <person name="Daugherty S.C."/>
            <person name="Shetty J."/>
            <person name="Shvartsbeyn A."/>
            <person name="Gebregeorgis E."/>
            <person name="Geer K."/>
            <person name="Tsegaye G."/>
            <person name="Malek J.A."/>
            <person name="Ayodeji B."/>
            <person name="Shatsman S."/>
            <person name="McLeod M.P."/>
            <person name="Smajs D."/>
            <person name="Howell J.K."/>
            <person name="Pal S."/>
            <person name="Amin A."/>
            <person name="Vashisth P."/>
            <person name="McNeill T.Z."/>
            <person name="Xiang Q."/>
            <person name="Sodergren E."/>
            <person name="Baca E."/>
            <person name="Weinstock G.M."/>
            <person name="Norris S.J."/>
            <person name="Fraser C.M."/>
            <person name="Paulsen I.T."/>
        </authorList>
    </citation>
    <scope>NUCLEOTIDE SEQUENCE [LARGE SCALE GENOMIC DNA]</scope>
    <source>
        <strain>ATCC 35405 / DSM 14222 / CIP 103919 / JCM 8153 / KCTC 15104</strain>
    </source>
</reference>
<name>DNAK_TREDE</name>
<organism>
    <name type="scientific">Treponema denticola (strain ATCC 35405 / DSM 14222 / CIP 103919 / JCM 8153 / KCTC 15104)</name>
    <dbReference type="NCBI Taxonomy" id="243275"/>
    <lineage>
        <taxon>Bacteria</taxon>
        <taxon>Pseudomonadati</taxon>
        <taxon>Spirochaetota</taxon>
        <taxon>Spirochaetia</taxon>
        <taxon>Spirochaetales</taxon>
        <taxon>Treponemataceae</taxon>
        <taxon>Treponema</taxon>
    </lineage>
</organism>
<evidence type="ECO:0000255" key="1">
    <source>
        <dbReference type="HAMAP-Rule" id="MF_00332"/>
    </source>
</evidence>
<evidence type="ECO:0000256" key="2">
    <source>
        <dbReference type="SAM" id="MobiDB-lite"/>
    </source>
</evidence>
<proteinExistence type="inferred from homology"/>
<sequence>MGKIIGIDLGTTNSCVSVMEGGEPVVIPNSEGGRTTPSIVGFTSKDERVVGQPAKNQMITNPERTVYSVKRFIGHRYSELTDELKRVPYKIVPQGEDVRIDIDGKLYSTQEISAFILQKMKKTAEDYLGETVTEAVITVPAYFNDAQRQATKDAGKIAGLEVKRIINEPTAASLAFGFNKDSKKEKTIAVYDLGGGTFDISILELGDGVFEVKSTNGDTHLGGDDFDNRIVNWLVDEFKKDTGIDLSKDRMALQRLREAAEKAKIELSSVANTEVNLPFITADANGPKHLQKSLSRAKFEQMTEDLFERTKEPCRKALKDAGITPDKIDDILLVGGSTRMPKVLQIIKEIFGKEGSKSVNPDEAVAMGAAIQGGILGGDVKDVLLLDVTPLSLGIETMGGVFTPLINRNTTIPTRKSQVFSTAADGQTAVSIHVLQGERGMASQNRTLGNFDLVGIPPAPRGVPQIEVTFDIDANGIVHVSAKDLGTGKEQHIRIESSSGLSESEIDRMVKEAEANAENDKLEKEKVEAKNNADSLIYQTEKTLKEMGDKIGAADKQKIEAAIADLRQALNSDNTADIKAKTENLQQAAYKIAEEMYKQQGAQAGADPNAGSSQGAQAGTDYGTSGPKTGTADDVDYEVVNDDNDK</sequence>
<protein>
    <recommendedName>
        <fullName evidence="1">Chaperone protein DnaK</fullName>
    </recommendedName>
    <alternativeName>
        <fullName evidence="1">HSP70</fullName>
    </alternativeName>
    <alternativeName>
        <fullName evidence="1">Heat shock 70 kDa protein</fullName>
    </alternativeName>
    <alternativeName>
        <fullName evidence="1">Heat shock protein 70</fullName>
    </alternativeName>
</protein>
<gene>
    <name evidence="1" type="primary">dnaK</name>
    <name type="ordered locus">TDE_0628</name>
</gene>
<accession>Q73Q16</accession>